<gene>
    <name type="primary">ULK2</name>
    <name type="synonym">KIAA0623</name>
</gene>
<name>ULK2_HUMAN</name>
<sequence length="1036" mass="112694">MEVVGDFEYSKRDLVGHGAFAVVFRGRHRQKTDWEVAIKSINKKNLSKSQILLGKEIKILKELQHENIVALYDVQELPNSVFLVMEYCNGGDLADYLQAKGTLSEDTIRVFLHQIAAAMRILHSKGIIHRDLKPQNILLSYANRRKSSVSGIRIKIADFGFARYLHSNMMAATLCGSPMYMAPEVIMSQHYDAKADLWSIGTVIYQCLVGKPPFQANSPQDLRMFYEKNRSLMPSIPRETSPYLANLLLGLLQRNQKDRMDFEAFFSHPFLEQGPVKKSCPVPVPMYSGSVSGSSCGSSPSCRFASPPSLPDMQHIQEENLSSPPLGPPNYLQVSKDSASTSSKNSSCDTDDFVLVPHNISSDHSCDMPVGTAGRRASNEFLVCGGQCQPTVSPHSETAPIPVPTQIRNYQRIEQNLTSTASSGTNVHGSPRSAVVRRSNTSPMGFLRPGSCSPVPADTAQTVGRRLSTGSSRPYSPSPLVGTIPEQFSQCCCGHPQGHDSRSRNSSGSPVPQAQSPQSLLSGARLQSAPTLTDIYQNKQKLRKQHSDPVCPSHTGAGYSYSPQPSRPGSLGTSPTKHLGSSPRSSDWFFKTPLPTIIGSPTKTTAPFKIPKTQASSNLLALVTRHGPAEEQSKDGNEPRECAHCLLVQGSERQRAEQQSKAVFGRSVSTGKLSDQQGKTPICRHQGSTDSLNTERPMDIAPAGACGGVLAPPAGTAASSKAVLFTVGSPPHSAAAPTCTHMFLRTRTTSVGPSNSGGSLCAMSGRVCVGSPPGPGFGSSPPGAEAAPSLRYVPYGASPPSLEGLITFEAPELPEETLMEREHTDTLRHLNVMLMFTECVLDLTAMRGGNPELCTSAVSLYQIQESVVVDQISQLSKDWGRVEQLVLYMKAAQLLAASLHLAKAQIKSGKLSPSTAVKQVVKNLNERYKFCITMCKKLTEKLNRFFSDKQRFIDEINSVTAEKLIYNCAVEMVQSAALDEMFQQTEDIVYRYHKAALLLEGLSRILQDPADIENVHKYKCSIERRLSALCHSTATV</sequence>
<accession>Q8IYT8</accession>
<accession>A8MY69</accession>
<accession>O75119</accession>
<proteinExistence type="evidence at protein level"/>
<comment type="function">
    <text evidence="8 10 11 12 13">Serine/threonine-protein kinase involved in autophagy in response to starvation. Acts upstream of phosphatidylinositol 3-kinase PIK3C3 to regulate the formation of autophagophores, the precursors of autophagosomes. Part of regulatory feedback loops in autophagy: acts both as a downstream effector and a negative regulator of mammalian target of rapamycin complex 1 (mTORC1) via interaction with RPTOR. Activated via phosphorylation by AMPK, also acts as a negative regulator of AMPK through phosphorylation of the AMPK subunits PRKAA1, PRKAB2 and PRKAG1. May phosphorylate ATG13/KIAA0652, FRS2, FRS3 and RPTOR; however such data need additional evidences. Not involved in ammonia-induced autophagy or in autophagic response of cerebellar granule neurons (CGN) to low potassium concentration. Plays a role early in neuronal differentiation and is required for granule cell axon formation: may govern axon formation via Ras-like GTPase signaling and through regulation of the Rab5-mediated endocytic pathways within developing axons.</text>
</comment>
<comment type="catalytic activity">
    <reaction>
        <text>L-seryl-[protein] + ATP = O-phospho-L-seryl-[protein] + ADP + H(+)</text>
        <dbReference type="Rhea" id="RHEA:17989"/>
        <dbReference type="Rhea" id="RHEA-COMP:9863"/>
        <dbReference type="Rhea" id="RHEA-COMP:11604"/>
        <dbReference type="ChEBI" id="CHEBI:15378"/>
        <dbReference type="ChEBI" id="CHEBI:29999"/>
        <dbReference type="ChEBI" id="CHEBI:30616"/>
        <dbReference type="ChEBI" id="CHEBI:83421"/>
        <dbReference type="ChEBI" id="CHEBI:456216"/>
        <dbReference type="EC" id="2.7.11.1"/>
    </reaction>
</comment>
<comment type="catalytic activity">
    <reaction>
        <text>L-threonyl-[protein] + ATP = O-phospho-L-threonyl-[protein] + ADP + H(+)</text>
        <dbReference type="Rhea" id="RHEA:46608"/>
        <dbReference type="Rhea" id="RHEA-COMP:11060"/>
        <dbReference type="Rhea" id="RHEA-COMP:11605"/>
        <dbReference type="ChEBI" id="CHEBI:15378"/>
        <dbReference type="ChEBI" id="CHEBI:30013"/>
        <dbReference type="ChEBI" id="CHEBI:30616"/>
        <dbReference type="ChEBI" id="CHEBI:61977"/>
        <dbReference type="ChEBI" id="CHEBI:456216"/>
        <dbReference type="EC" id="2.7.11.1"/>
    </reaction>
</comment>
<comment type="subunit">
    <text evidence="1 8 13">Interacts with SYNGAP1 (By similarity). Component of a complex consisting of ATG13/KIAA0652, ULK1 and RB1CC1/FIP200. Interacts (via C-terminus) with ATG13/KIAA0652. Associates with the mammalian target of rapamycin complex 1 (mTORC1) through an interaction with RPTOR.</text>
</comment>
<comment type="subcellular location">
    <subcellularLocation>
        <location evidence="8">Cytoplasmic vesicle membrane</location>
        <topology evidence="8">Peripheral membrane protein</topology>
    </subcellularLocation>
    <text>Localizes to pre-autophagosomal membrane.</text>
</comment>
<comment type="domain">
    <text evidence="8">The CTD-like region mediates membrane-binding and incorporation into large protein complexes.</text>
</comment>
<comment type="PTM">
    <text evidence="9">Autophosphorylated. In response to nutrient limitation, probably phosphorylated and activated by AMPK, leading to activate autophagy.</text>
</comment>
<comment type="similarity">
    <text evidence="3">Belongs to the protein kinase superfamily. Ser/Thr protein kinase family. APG1/unc-51/ULK1 subfamily.</text>
</comment>
<comment type="sequence caution" evidence="15">
    <conflict type="erroneous initiation">
        <sequence resource="EMBL-CDS" id="BAA31598"/>
    </conflict>
    <text>Extended N-terminus.</text>
</comment>
<feature type="chain" id="PRO_0000086782" description="Serine/threonine-protein kinase ULK2">
    <location>
        <begin position="1"/>
        <end position="1036"/>
    </location>
</feature>
<feature type="domain" description="Protein kinase" evidence="3">
    <location>
        <begin position="9"/>
        <end position="271"/>
    </location>
</feature>
<feature type="region of interest" description="Disordered" evidence="5">
    <location>
        <begin position="319"/>
        <end position="348"/>
    </location>
</feature>
<feature type="region of interest" description="Disordered" evidence="5">
    <location>
        <begin position="418"/>
        <end position="460"/>
    </location>
</feature>
<feature type="region of interest" description="Disordered" evidence="5">
    <location>
        <begin position="491"/>
        <end position="522"/>
    </location>
</feature>
<feature type="region of interest" description="Disordered" evidence="5">
    <location>
        <begin position="540"/>
        <end position="588"/>
    </location>
</feature>
<feature type="region of interest" description="Disordered" evidence="5">
    <location>
        <begin position="656"/>
        <end position="695"/>
    </location>
</feature>
<feature type="region of interest" description="CTD-like region">
    <location>
        <begin position="812"/>
        <end position="1036"/>
    </location>
</feature>
<feature type="compositionally biased region" description="Low complexity" evidence="5">
    <location>
        <begin position="335"/>
        <end position="348"/>
    </location>
</feature>
<feature type="compositionally biased region" description="Polar residues" evidence="5">
    <location>
        <begin position="418"/>
        <end position="428"/>
    </location>
</feature>
<feature type="compositionally biased region" description="Polar residues" evidence="5">
    <location>
        <begin position="504"/>
        <end position="521"/>
    </location>
</feature>
<feature type="compositionally biased region" description="Polar residues" evidence="5">
    <location>
        <begin position="659"/>
        <end position="679"/>
    </location>
</feature>
<feature type="active site" description="Proton acceptor" evidence="3 4">
    <location>
        <position position="131"/>
    </location>
</feature>
<feature type="binding site" evidence="3">
    <location>
        <begin position="15"/>
        <end position="23"/>
    </location>
    <ligand>
        <name>ATP</name>
        <dbReference type="ChEBI" id="CHEBI:30616"/>
    </ligand>
</feature>
<feature type="binding site" evidence="15">
    <location>
        <position position="39"/>
    </location>
    <ligand>
        <name>ATP</name>
        <dbReference type="ChEBI" id="CHEBI:30616"/>
    </ligand>
</feature>
<feature type="modified residue" description="Phosphoserine" evidence="2">
    <location>
        <position position="430"/>
    </location>
</feature>
<feature type="modified residue" description="Phosphoserine" evidence="2">
    <location>
        <position position="771"/>
    </location>
</feature>
<feature type="modified residue" description="Phosphoserine" evidence="2">
    <location>
        <position position="780"/>
    </location>
</feature>
<feature type="sequence variant" id="VAR_041281" description="In dbSNP:rs34670978." evidence="7">
    <original>P</original>
    <variation>S</variation>
    <location>
        <position position="242"/>
    </location>
</feature>
<feature type="sequence variant" id="VAR_055287" description="In dbSNP:rs150122." evidence="6 14">
    <original>V</original>
    <variation>M</variation>
    <location>
        <position position="370"/>
    </location>
</feature>
<feature type="sequence variant" id="VAR_055288" description="In dbSNP:rs4462660.">
    <original>T</original>
    <variation>I</variation>
    <location>
        <position position="533"/>
    </location>
</feature>
<feature type="sequence variant" id="VAR_041282" description="In a metastatic melanoma sample; somatic mutation." evidence="7">
    <original>G</original>
    <variation>E</variation>
    <location>
        <position position="627"/>
    </location>
</feature>
<feature type="sequence variant" id="VAR_041283" description="In a metastatic melanoma sample; somatic mutation." evidence="7">
    <original>A</original>
    <variation>V</variation>
    <location>
        <position position="662"/>
    </location>
</feature>
<feature type="sequence variant" id="VAR_041284" description="In dbSNP:rs55730189." evidence="7">
    <original>G</original>
    <variation>R</variation>
    <location>
        <position position="752"/>
    </location>
</feature>
<feature type="sequence variant" id="VAR_041285" description="In dbSNP:rs35107651." evidence="7">
    <original>D</original>
    <variation>E</variation>
    <location>
        <position position="842"/>
    </location>
</feature>
<feature type="mutagenesis site" description="Decreased kinase activity and decreased autophosphorylation." evidence="8">
    <original>K</original>
    <variation>R</variation>
    <location>
        <position position="39"/>
    </location>
</feature>
<feature type="sequence conflict" description="In Ref. 1; BAA31598." evidence="15" ref="1">
    <original>C</original>
    <variation>R</variation>
    <location>
        <position position="935"/>
    </location>
</feature>
<feature type="strand" evidence="17">
    <location>
        <begin position="2"/>
        <end position="4"/>
    </location>
</feature>
<feature type="strand" evidence="17">
    <location>
        <begin position="7"/>
        <end position="17"/>
    </location>
</feature>
<feature type="strand" evidence="17">
    <location>
        <begin position="19"/>
        <end position="31"/>
    </location>
</feature>
<feature type="strand" evidence="17">
    <location>
        <begin position="35"/>
        <end position="42"/>
    </location>
</feature>
<feature type="helix" evidence="17">
    <location>
        <begin position="43"/>
        <end position="47"/>
    </location>
</feature>
<feature type="strand" evidence="17">
    <location>
        <begin position="49"/>
        <end position="51"/>
    </location>
</feature>
<feature type="helix" evidence="17">
    <location>
        <begin position="56"/>
        <end position="62"/>
    </location>
</feature>
<feature type="strand" evidence="17">
    <location>
        <begin position="71"/>
        <end position="76"/>
    </location>
</feature>
<feature type="strand" evidence="17">
    <location>
        <begin position="78"/>
        <end position="86"/>
    </location>
</feature>
<feature type="helix" evidence="17">
    <location>
        <begin position="93"/>
        <end position="100"/>
    </location>
</feature>
<feature type="helix" evidence="17">
    <location>
        <begin position="105"/>
        <end position="125"/>
    </location>
</feature>
<feature type="turn" evidence="17">
    <location>
        <begin position="134"/>
        <end position="136"/>
    </location>
</feature>
<feature type="strand" evidence="17">
    <location>
        <begin position="137"/>
        <end position="143"/>
    </location>
</feature>
<feature type="helix" evidence="17">
    <location>
        <begin position="149"/>
        <end position="151"/>
    </location>
</feature>
<feature type="strand" evidence="17">
    <location>
        <begin position="152"/>
        <end position="156"/>
    </location>
</feature>
<feature type="helix" evidence="17">
    <location>
        <begin position="167"/>
        <end position="174"/>
    </location>
</feature>
<feature type="helix" evidence="17">
    <location>
        <begin position="183"/>
        <end position="186"/>
    </location>
</feature>
<feature type="helix" evidence="17">
    <location>
        <begin position="188"/>
        <end position="190"/>
    </location>
</feature>
<feature type="turn" evidence="16">
    <location>
        <begin position="191"/>
        <end position="194"/>
    </location>
</feature>
<feature type="helix" evidence="17">
    <location>
        <begin position="195"/>
        <end position="209"/>
    </location>
</feature>
<feature type="helix" evidence="17">
    <location>
        <begin position="219"/>
        <end position="228"/>
    </location>
</feature>
<feature type="helix" evidence="17">
    <location>
        <begin position="242"/>
        <end position="251"/>
    </location>
</feature>
<feature type="helix" evidence="17">
    <location>
        <begin position="256"/>
        <end position="258"/>
    </location>
</feature>
<feature type="helix" evidence="17">
    <location>
        <begin position="262"/>
        <end position="266"/>
    </location>
</feature>
<feature type="turn" evidence="17">
    <location>
        <begin position="269"/>
        <end position="271"/>
    </location>
</feature>
<organism>
    <name type="scientific">Homo sapiens</name>
    <name type="common">Human</name>
    <dbReference type="NCBI Taxonomy" id="9606"/>
    <lineage>
        <taxon>Eukaryota</taxon>
        <taxon>Metazoa</taxon>
        <taxon>Chordata</taxon>
        <taxon>Craniata</taxon>
        <taxon>Vertebrata</taxon>
        <taxon>Euteleostomi</taxon>
        <taxon>Mammalia</taxon>
        <taxon>Eutheria</taxon>
        <taxon>Euarchontoglires</taxon>
        <taxon>Primates</taxon>
        <taxon>Haplorrhini</taxon>
        <taxon>Catarrhini</taxon>
        <taxon>Hominidae</taxon>
        <taxon>Homo</taxon>
    </lineage>
</organism>
<dbReference type="EC" id="2.7.11.1"/>
<dbReference type="EMBL" id="AB014523">
    <property type="protein sequence ID" value="BAA31598.2"/>
    <property type="status" value="ALT_INIT"/>
    <property type="molecule type" value="mRNA"/>
</dbReference>
<dbReference type="EMBL" id="AC005722">
    <property type="status" value="NOT_ANNOTATED_CDS"/>
    <property type="molecule type" value="Genomic_DNA"/>
</dbReference>
<dbReference type="EMBL" id="BC034988">
    <property type="protein sequence ID" value="AAH34988.1"/>
    <property type="molecule type" value="mRNA"/>
</dbReference>
<dbReference type="CCDS" id="CCDS11213.1"/>
<dbReference type="RefSeq" id="NP_001136082.1">
    <property type="nucleotide sequence ID" value="NM_001142610.2"/>
</dbReference>
<dbReference type="RefSeq" id="NP_055498.3">
    <property type="nucleotide sequence ID" value="NM_014683.3"/>
</dbReference>
<dbReference type="PDB" id="6QAT">
    <property type="method" value="X-ray"/>
    <property type="resolution" value="2.77 A"/>
    <property type="chains" value="A/B/C/D=1-276"/>
</dbReference>
<dbReference type="PDB" id="6QAU">
    <property type="method" value="X-ray"/>
    <property type="resolution" value="2.48 A"/>
    <property type="chains" value="A/B/C=1-276"/>
</dbReference>
<dbReference type="PDB" id="6QAV">
    <property type="method" value="X-ray"/>
    <property type="resolution" value="2.05 A"/>
    <property type="chains" value="A/B/C/D=1-276"/>
</dbReference>
<dbReference type="PDB" id="6YID">
    <property type="method" value="X-ray"/>
    <property type="resolution" value="2.70 A"/>
    <property type="chains" value="A/B/C/D=1-276"/>
</dbReference>
<dbReference type="PDBsum" id="6QAT"/>
<dbReference type="PDBsum" id="6QAU"/>
<dbReference type="PDBsum" id="6QAV"/>
<dbReference type="PDBsum" id="6YID"/>
<dbReference type="SMR" id="Q8IYT8"/>
<dbReference type="BioGRID" id="115058">
    <property type="interactions" value="27"/>
</dbReference>
<dbReference type="CORUM" id="Q8IYT8"/>
<dbReference type="FunCoup" id="Q8IYT8">
    <property type="interactions" value="2390"/>
</dbReference>
<dbReference type="IntAct" id="Q8IYT8">
    <property type="interactions" value="57"/>
</dbReference>
<dbReference type="STRING" id="9606.ENSP00000378914"/>
<dbReference type="BindingDB" id="Q8IYT8"/>
<dbReference type="ChEMBL" id="CHEMBL5435"/>
<dbReference type="DrugBank" id="DB12010">
    <property type="generic name" value="Fostamatinib"/>
</dbReference>
<dbReference type="DrugCentral" id="Q8IYT8"/>
<dbReference type="GuidetoPHARMACOLOGY" id="2272"/>
<dbReference type="GlyCosmos" id="Q8IYT8">
    <property type="glycosylation" value="1 site, 1 glycan"/>
</dbReference>
<dbReference type="GlyGen" id="Q8IYT8">
    <property type="glycosylation" value="1 site, 1 O-linked glycan (1 site)"/>
</dbReference>
<dbReference type="iPTMnet" id="Q8IYT8"/>
<dbReference type="PhosphoSitePlus" id="Q8IYT8"/>
<dbReference type="BioMuta" id="ULK2"/>
<dbReference type="DMDM" id="296453001"/>
<dbReference type="jPOST" id="Q8IYT8"/>
<dbReference type="MassIVE" id="Q8IYT8"/>
<dbReference type="PaxDb" id="9606-ENSP00000378914"/>
<dbReference type="PeptideAtlas" id="Q8IYT8"/>
<dbReference type="ProteomicsDB" id="71237"/>
<dbReference type="Antibodypedia" id="2063">
    <property type="antibodies" value="549 antibodies from 33 providers"/>
</dbReference>
<dbReference type="DNASU" id="9706"/>
<dbReference type="Ensembl" id="ENST00000361658.6">
    <property type="protein sequence ID" value="ENSP00000354877.2"/>
    <property type="gene ID" value="ENSG00000083290.20"/>
</dbReference>
<dbReference type="Ensembl" id="ENST00000395544.9">
    <property type="protein sequence ID" value="ENSP00000378914.4"/>
    <property type="gene ID" value="ENSG00000083290.20"/>
</dbReference>
<dbReference type="GeneID" id="9706"/>
<dbReference type="KEGG" id="hsa:9706"/>
<dbReference type="MANE-Select" id="ENST00000395544.9">
    <property type="protein sequence ID" value="ENSP00000378914.4"/>
    <property type="RefSeq nucleotide sequence ID" value="NM_014683.4"/>
    <property type="RefSeq protein sequence ID" value="NP_055498.3"/>
</dbReference>
<dbReference type="UCSC" id="uc002gwm.5">
    <property type="organism name" value="human"/>
</dbReference>
<dbReference type="AGR" id="HGNC:13480"/>
<dbReference type="CTD" id="9706"/>
<dbReference type="DisGeNET" id="9706"/>
<dbReference type="GeneCards" id="ULK2"/>
<dbReference type="HGNC" id="HGNC:13480">
    <property type="gene designation" value="ULK2"/>
</dbReference>
<dbReference type="HPA" id="ENSG00000083290">
    <property type="expression patterns" value="Low tissue specificity"/>
</dbReference>
<dbReference type="MIM" id="608650">
    <property type="type" value="gene"/>
</dbReference>
<dbReference type="neXtProt" id="NX_Q8IYT8"/>
<dbReference type="OpenTargets" id="ENSG00000083290"/>
<dbReference type="PharmGKB" id="PA37780"/>
<dbReference type="VEuPathDB" id="HostDB:ENSG00000083290"/>
<dbReference type="eggNOG" id="KOG0595">
    <property type="taxonomic scope" value="Eukaryota"/>
</dbReference>
<dbReference type="GeneTree" id="ENSGT00940000157588"/>
<dbReference type="HOGENOM" id="CLU_011264_0_0_1"/>
<dbReference type="InParanoid" id="Q8IYT8"/>
<dbReference type="OMA" id="SFFSHPF"/>
<dbReference type="OrthoDB" id="346907at2759"/>
<dbReference type="PAN-GO" id="Q8IYT8">
    <property type="GO annotations" value="13 GO annotations based on evolutionary models"/>
</dbReference>
<dbReference type="PhylomeDB" id="Q8IYT8"/>
<dbReference type="TreeFam" id="TF324551"/>
<dbReference type="PathwayCommons" id="Q8IYT8"/>
<dbReference type="SignaLink" id="Q8IYT8"/>
<dbReference type="SIGNOR" id="Q8IYT8"/>
<dbReference type="BioGRID-ORCS" id="9706">
    <property type="hits" value="16 hits in 1185 CRISPR screens"/>
</dbReference>
<dbReference type="ChiTaRS" id="ULK2">
    <property type="organism name" value="human"/>
</dbReference>
<dbReference type="GenomeRNAi" id="9706"/>
<dbReference type="Pharos" id="Q8IYT8">
    <property type="development level" value="Tchem"/>
</dbReference>
<dbReference type="PRO" id="PR:Q8IYT8"/>
<dbReference type="Proteomes" id="UP000005640">
    <property type="component" value="Chromosome 17"/>
</dbReference>
<dbReference type="RNAct" id="Q8IYT8">
    <property type="molecule type" value="protein"/>
</dbReference>
<dbReference type="Bgee" id="ENSG00000083290">
    <property type="expression patterns" value="Expressed in cortical plate and 200 other cell types or tissues"/>
</dbReference>
<dbReference type="ExpressionAtlas" id="Q8IYT8">
    <property type="expression patterns" value="baseline and differential"/>
</dbReference>
<dbReference type="GO" id="GO:0005776">
    <property type="term" value="C:autophagosome"/>
    <property type="evidence" value="ECO:0000318"/>
    <property type="project" value="GO_Central"/>
</dbReference>
<dbReference type="GO" id="GO:0005737">
    <property type="term" value="C:cytoplasm"/>
    <property type="evidence" value="ECO:0000318"/>
    <property type="project" value="GO_Central"/>
</dbReference>
<dbReference type="GO" id="GO:0030659">
    <property type="term" value="C:cytoplasmic vesicle membrane"/>
    <property type="evidence" value="ECO:0007669"/>
    <property type="project" value="UniProtKB-SubCell"/>
</dbReference>
<dbReference type="GO" id="GO:0005829">
    <property type="term" value="C:cytosol"/>
    <property type="evidence" value="ECO:0000318"/>
    <property type="project" value="GO_Central"/>
</dbReference>
<dbReference type="GO" id="GO:0000407">
    <property type="term" value="C:phagophore assembly site"/>
    <property type="evidence" value="ECO:0000318"/>
    <property type="project" value="GO_Central"/>
</dbReference>
<dbReference type="GO" id="GO:0034045">
    <property type="term" value="C:phagophore assembly site membrane"/>
    <property type="evidence" value="ECO:0000314"/>
    <property type="project" value="UniProtKB"/>
</dbReference>
<dbReference type="GO" id="GO:0005524">
    <property type="term" value="F:ATP binding"/>
    <property type="evidence" value="ECO:0007669"/>
    <property type="project" value="UniProtKB-KW"/>
</dbReference>
<dbReference type="GO" id="GO:0106310">
    <property type="term" value="F:protein serine kinase activity"/>
    <property type="evidence" value="ECO:0007669"/>
    <property type="project" value="RHEA"/>
</dbReference>
<dbReference type="GO" id="GO:0004674">
    <property type="term" value="F:protein serine/threonine kinase activity"/>
    <property type="evidence" value="ECO:0000314"/>
    <property type="project" value="UniProtKB"/>
</dbReference>
<dbReference type="GO" id="GO:0000045">
    <property type="term" value="P:autophagosome assembly"/>
    <property type="evidence" value="ECO:0000318"/>
    <property type="project" value="GO_Central"/>
</dbReference>
<dbReference type="GO" id="GO:0006914">
    <property type="term" value="P:autophagy"/>
    <property type="evidence" value="ECO:0000314"/>
    <property type="project" value="GO_Central"/>
</dbReference>
<dbReference type="GO" id="GO:0048675">
    <property type="term" value="P:axon extension"/>
    <property type="evidence" value="ECO:0000318"/>
    <property type="project" value="GO_Central"/>
</dbReference>
<dbReference type="GO" id="GO:0007411">
    <property type="term" value="P:axon guidance"/>
    <property type="evidence" value="ECO:0007669"/>
    <property type="project" value="Ensembl"/>
</dbReference>
<dbReference type="GO" id="GO:0048668">
    <property type="term" value="P:collateral sprouting"/>
    <property type="evidence" value="ECO:0007669"/>
    <property type="project" value="Ensembl"/>
</dbReference>
<dbReference type="GO" id="GO:0000423">
    <property type="term" value="P:mitophagy"/>
    <property type="evidence" value="ECO:0000318"/>
    <property type="project" value="GO_Central"/>
</dbReference>
<dbReference type="GO" id="GO:0048671">
    <property type="term" value="P:negative regulation of collateral sprouting"/>
    <property type="evidence" value="ECO:0000318"/>
    <property type="project" value="GO_Central"/>
</dbReference>
<dbReference type="GO" id="GO:0034727">
    <property type="term" value="P:piecemeal microautophagy of the nucleus"/>
    <property type="evidence" value="ECO:0000318"/>
    <property type="project" value="GO_Central"/>
</dbReference>
<dbReference type="GO" id="GO:0046777">
    <property type="term" value="P:protein autophosphorylation"/>
    <property type="evidence" value="ECO:0000314"/>
    <property type="project" value="UniProtKB"/>
</dbReference>
<dbReference type="GO" id="GO:0008104">
    <property type="term" value="P:protein localization"/>
    <property type="evidence" value="ECO:0007669"/>
    <property type="project" value="Ensembl"/>
</dbReference>
<dbReference type="GO" id="GO:0010506">
    <property type="term" value="P:regulation of autophagy"/>
    <property type="evidence" value="ECO:0000318"/>
    <property type="project" value="GO_Central"/>
</dbReference>
<dbReference type="GO" id="GO:0042594">
    <property type="term" value="P:response to starvation"/>
    <property type="evidence" value="ECO:0000250"/>
    <property type="project" value="UniProtKB"/>
</dbReference>
<dbReference type="GO" id="GO:0061709">
    <property type="term" value="P:reticulophagy"/>
    <property type="evidence" value="ECO:0000318"/>
    <property type="project" value="GO_Central"/>
</dbReference>
<dbReference type="GO" id="GO:0007165">
    <property type="term" value="P:signal transduction"/>
    <property type="evidence" value="ECO:0007669"/>
    <property type="project" value="InterPro"/>
</dbReference>
<dbReference type="GO" id="GO:0160038">
    <property type="term" value="P:somatic sensory system development"/>
    <property type="evidence" value="ECO:0007669"/>
    <property type="project" value="Ensembl"/>
</dbReference>
<dbReference type="CDD" id="cd14201">
    <property type="entry name" value="STKc_ULK2"/>
    <property type="match status" value="1"/>
</dbReference>
<dbReference type="FunFam" id="1.10.510.10:FF:000128">
    <property type="entry name" value="serine/threonine-protein kinase ULK2 isoform X2"/>
    <property type="match status" value="1"/>
</dbReference>
<dbReference type="FunFam" id="3.30.200.20:FF:000149">
    <property type="entry name" value="serine/threonine-protein kinase unc-51 isoform X1"/>
    <property type="match status" value="1"/>
</dbReference>
<dbReference type="Gene3D" id="3.30.200.20">
    <property type="entry name" value="Phosphorylase Kinase, domain 1"/>
    <property type="match status" value="1"/>
</dbReference>
<dbReference type="Gene3D" id="1.10.510.10">
    <property type="entry name" value="Transferase(Phosphotransferase) domain 1"/>
    <property type="match status" value="1"/>
</dbReference>
<dbReference type="InterPro" id="IPR045269">
    <property type="entry name" value="Atg1-like"/>
</dbReference>
<dbReference type="InterPro" id="IPR048941">
    <property type="entry name" value="ATG1-like_MIT2"/>
</dbReference>
<dbReference type="InterPro" id="IPR022708">
    <property type="entry name" value="Atg1-like_tMIT"/>
</dbReference>
<dbReference type="InterPro" id="IPR011009">
    <property type="entry name" value="Kinase-like_dom_sf"/>
</dbReference>
<dbReference type="InterPro" id="IPR000719">
    <property type="entry name" value="Prot_kinase_dom"/>
</dbReference>
<dbReference type="InterPro" id="IPR017441">
    <property type="entry name" value="Protein_kinase_ATP_BS"/>
</dbReference>
<dbReference type="InterPro" id="IPR016237">
    <property type="entry name" value="Ser/Thr_kin_STPK_Ulk-1/2"/>
</dbReference>
<dbReference type="InterPro" id="IPR008271">
    <property type="entry name" value="Ser/Thr_kinase_AS"/>
</dbReference>
<dbReference type="PANTHER" id="PTHR24348">
    <property type="entry name" value="SERINE/THREONINE-PROTEIN KINASE UNC-51-RELATED"/>
    <property type="match status" value="1"/>
</dbReference>
<dbReference type="PANTHER" id="PTHR24348:SF18">
    <property type="entry name" value="SERINE_THREONINE-PROTEIN KINASE ULK2"/>
    <property type="match status" value="1"/>
</dbReference>
<dbReference type="Pfam" id="PF12063">
    <property type="entry name" value="ATG1-like_MIT1"/>
    <property type="match status" value="1"/>
</dbReference>
<dbReference type="Pfam" id="PF21127">
    <property type="entry name" value="ATG1-like_MIT2"/>
    <property type="match status" value="1"/>
</dbReference>
<dbReference type="Pfam" id="PF00069">
    <property type="entry name" value="Pkinase"/>
    <property type="match status" value="1"/>
</dbReference>
<dbReference type="PIRSF" id="PIRSF000580">
    <property type="entry name" value="Ser/Thr_PK_STPK_ULK-1/2"/>
    <property type="match status" value="1"/>
</dbReference>
<dbReference type="SMART" id="SM00220">
    <property type="entry name" value="S_TKc"/>
    <property type="match status" value="1"/>
</dbReference>
<dbReference type="SUPFAM" id="SSF56112">
    <property type="entry name" value="Protein kinase-like (PK-like)"/>
    <property type="match status" value="1"/>
</dbReference>
<dbReference type="PROSITE" id="PS00107">
    <property type="entry name" value="PROTEIN_KINASE_ATP"/>
    <property type="match status" value="1"/>
</dbReference>
<dbReference type="PROSITE" id="PS50011">
    <property type="entry name" value="PROTEIN_KINASE_DOM"/>
    <property type="match status" value="1"/>
</dbReference>
<dbReference type="PROSITE" id="PS00108">
    <property type="entry name" value="PROTEIN_KINASE_ST"/>
    <property type="match status" value="1"/>
</dbReference>
<reference key="1">
    <citation type="journal article" date="1998" name="DNA Res.">
        <title>Prediction of the coding sequences of unidentified human genes. X. The complete sequences of 100 new cDNA clones from brain which can code for large proteins in vitro.</title>
        <authorList>
            <person name="Ishikawa K."/>
            <person name="Nagase T."/>
            <person name="Suyama M."/>
            <person name="Miyajima N."/>
            <person name="Tanaka A."/>
            <person name="Kotani H."/>
            <person name="Nomura N."/>
            <person name="Ohara O."/>
        </authorList>
    </citation>
    <scope>NUCLEOTIDE SEQUENCE [LARGE SCALE MRNA]</scope>
    <scope>VARIANT MET-370</scope>
    <source>
        <tissue>Brain</tissue>
    </source>
</reference>
<reference key="2">
    <citation type="journal article" date="2006" name="Nature">
        <title>DNA sequence of human chromosome 17 and analysis of rearrangement in the human lineage.</title>
        <authorList>
            <person name="Zody M.C."/>
            <person name="Garber M."/>
            <person name="Adams D.J."/>
            <person name="Sharpe T."/>
            <person name="Harrow J."/>
            <person name="Lupski J.R."/>
            <person name="Nicholson C."/>
            <person name="Searle S.M."/>
            <person name="Wilming L."/>
            <person name="Young S.K."/>
            <person name="Abouelleil A."/>
            <person name="Allen N.R."/>
            <person name="Bi W."/>
            <person name="Bloom T."/>
            <person name="Borowsky M.L."/>
            <person name="Bugalter B.E."/>
            <person name="Butler J."/>
            <person name="Chang J.L."/>
            <person name="Chen C.-K."/>
            <person name="Cook A."/>
            <person name="Corum B."/>
            <person name="Cuomo C.A."/>
            <person name="de Jong P.J."/>
            <person name="DeCaprio D."/>
            <person name="Dewar K."/>
            <person name="FitzGerald M."/>
            <person name="Gilbert J."/>
            <person name="Gibson R."/>
            <person name="Gnerre S."/>
            <person name="Goldstein S."/>
            <person name="Grafham D.V."/>
            <person name="Grocock R."/>
            <person name="Hafez N."/>
            <person name="Hagopian D.S."/>
            <person name="Hart E."/>
            <person name="Norman C.H."/>
            <person name="Humphray S."/>
            <person name="Jaffe D.B."/>
            <person name="Jones M."/>
            <person name="Kamal M."/>
            <person name="Khodiyar V.K."/>
            <person name="LaButti K."/>
            <person name="Laird G."/>
            <person name="Lehoczky J."/>
            <person name="Liu X."/>
            <person name="Lokyitsang T."/>
            <person name="Loveland J."/>
            <person name="Lui A."/>
            <person name="Macdonald P."/>
            <person name="Major J.E."/>
            <person name="Matthews L."/>
            <person name="Mauceli E."/>
            <person name="McCarroll S.A."/>
            <person name="Mihalev A.H."/>
            <person name="Mudge J."/>
            <person name="Nguyen C."/>
            <person name="Nicol R."/>
            <person name="O'Leary S.B."/>
            <person name="Osoegawa K."/>
            <person name="Schwartz D.C."/>
            <person name="Shaw-Smith C."/>
            <person name="Stankiewicz P."/>
            <person name="Steward C."/>
            <person name="Swarbreck D."/>
            <person name="Venkataraman V."/>
            <person name="Whittaker C.A."/>
            <person name="Yang X."/>
            <person name="Zimmer A.R."/>
            <person name="Bradley A."/>
            <person name="Hubbard T."/>
            <person name="Birren B.W."/>
            <person name="Rogers J."/>
            <person name="Lander E.S."/>
            <person name="Nusbaum C."/>
        </authorList>
    </citation>
    <scope>NUCLEOTIDE SEQUENCE [LARGE SCALE GENOMIC DNA]</scope>
</reference>
<reference key="3">
    <citation type="journal article" date="2004" name="Genome Res.">
        <title>The status, quality, and expansion of the NIH full-length cDNA project: the Mammalian Gene Collection (MGC).</title>
        <authorList>
            <consortium name="The MGC Project Team"/>
        </authorList>
    </citation>
    <scope>NUCLEOTIDE SEQUENCE [LARGE SCALE MRNA]</scope>
    <scope>VARIANT MET-370</scope>
    <source>
        <tissue>Testis</tissue>
    </source>
</reference>
<reference key="4">
    <citation type="journal article" date="2009" name="Mol. Cell. Biol.">
        <title>Kinase-inactivated ULK proteins inhibit autophagy via their conserved C-terminal domains using an Atg13-independent mechanism.</title>
        <authorList>
            <person name="Chan E.Y.W."/>
            <person name="Longatti A."/>
            <person name="McKnight N.C."/>
            <person name="Tooze S.A."/>
        </authorList>
    </citation>
    <scope>FUNCTION</scope>
    <scope>SUBCELLULAR LOCATION</scope>
    <scope>AUTOPHOSPHORYLATION</scope>
    <scope>INTERACTION WITH ATG13</scope>
    <scope>DOMAIN</scope>
    <scope>MUTAGENESIS OF LYS-39</scope>
</reference>
<reference key="5">
    <citation type="journal article" date="2011" name="Autophagy">
        <title>The requirement of uncoordinated 51-like kinase 1 (ULK1) and ULK2 in the regulation of autophagy.</title>
        <authorList>
            <person name="Lee E.J."/>
            <person name="Tournier C."/>
        </authorList>
    </citation>
    <scope>FUNCTION</scope>
</reference>
<reference key="6">
    <citation type="journal article" date="2011" name="Autophagy">
        <title>Ulk1-mediated phosphorylation of AMPK constitutes a negative regulatory feedback loop.</title>
        <authorList>
            <person name="Loffler A.S."/>
            <person name="Alers S."/>
            <person name="Dieterle A.M."/>
            <person name="Keppeler H."/>
            <person name="Franz-Wachtel M."/>
            <person name="Kundu M."/>
            <person name="Campbell D.G."/>
            <person name="Wesselborg S."/>
            <person name="Alessi D.R."/>
            <person name="Stork B."/>
        </authorList>
    </citation>
    <scope>FUNCTION IN PHOSPHORYLATION OF AMPK</scope>
</reference>
<reference key="7">
    <citation type="journal article" date="2011" name="Autophagy">
        <title>ULK1 inhibits the kinase activity of mTORC1 and cell proliferation.</title>
        <authorList>
            <person name="Jung C.H."/>
            <person name="Seo M."/>
            <person name="Otto N.M."/>
            <person name="Kim D.H."/>
        </authorList>
    </citation>
    <scope>FUNCTION</scope>
    <scope>INTERACTION WITH RPTOR</scope>
</reference>
<reference key="8">
    <citation type="journal article" date="2011" name="Proc. Natl. Acad. Sci. U.S.A.">
        <title>Ammonia-induced autophagy is independent of ULK1/ULK2 kinases.</title>
        <authorList>
            <person name="Cheong H."/>
            <person name="Lindsten T."/>
            <person name="Wu J."/>
            <person name="Lu C."/>
            <person name="Thompson C.B."/>
        </authorList>
    </citation>
    <scope>FUNCTION</scope>
</reference>
<reference key="9">
    <citation type="journal article" date="2011" name="Science">
        <title>Phosphorylation of ULK1 (hATG1) by AMP-activated protein kinase connects energy sensing to mitophagy.</title>
        <authorList>
            <person name="Egan D.F."/>
            <person name="Shackelford D.B."/>
            <person name="Mihaylova M.M."/>
            <person name="Gelino S."/>
            <person name="Kohnz R.A."/>
            <person name="Mair W."/>
            <person name="Vasquez D.S."/>
            <person name="Joshi A."/>
            <person name="Gwinn D.M."/>
            <person name="Taylor R."/>
            <person name="Asara J.M."/>
            <person name="Fitzpatrick J."/>
            <person name="Dillin A."/>
            <person name="Viollet B."/>
            <person name="Kundu M."/>
            <person name="Hansen M."/>
            <person name="Shaw R.J."/>
        </authorList>
    </citation>
    <scope>PHOSPHORYLATION BY AMPK</scope>
</reference>
<reference key="10">
    <citation type="journal article" date="2007" name="Nature">
        <title>Patterns of somatic mutation in human cancer genomes.</title>
        <authorList>
            <person name="Greenman C."/>
            <person name="Stephens P."/>
            <person name="Smith R."/>
            <person name="Dalgliesh G.L."/>
            <person name="Hunter C."/>
            <person name="Bignell G."/>
            <person name="Davies H."/>
            <person name="Teague J."/>
            <person name="Butler A."/>
            <person name="Stevens C."/>
            <person name="Edkins S."/>
            <person name="O'Meara S."/>
            <person name="Vastrik I."/>
            <person name="Schmidt E.E."/>
            <person name="Avis T."/>
            <person name="Barthorpe S."/>
            <person name="Bhamra G."/>
            <person name="Buck G."/>
            <person name="Choudhury B."/>
            <person name="Clements J."/>
            <person name="Cole J."/>
            <person name="Dicks E."/>
            <person name="Forbes S."/>
            <person name="Gray K."/>
            <person name="Halliday K."/>
            <person name="Harrison R."/>
            <person name="Hills K."/>
            <person name="Hinton J."/>
            <person name="Jenkinson A."/>
            <person name="Jones D."/>
            <person name="Menzies A."/>
            <person name="Mironenko T."/>
            <person name="Perry J."/>
            <person name="Raine K."/>
            <person name="Richardson D."/>
            <person name="Shepherd R."/>
            <person name="Small A."/>
            <person name="Tofts C."/>
            <person name="Varian J."/>
            <person name="Webb T."/>
            <person name="West S."/>
            <person name="Widaa S."/>
            <person name="Yates A."/>
            <person name="Cahill D.P."/>
            <person name="Louis D.N."/>
            <person name="Goldstraw P."/>
            <person name="Nicholson A.G."/>
            <person name="Brasseur F."/>
            <person name="Looijenga L."/>
            <person name="Weber B.L."/>
            <person name="Chiew Y.-E."/>
            <person name="DeFazio A."/>
            <person name="Greaves M.F."/>
            <person name="Green A.R."/>
            <person name="Campbell P."/>
            <person name="Birney E."/>
            <person name="Easton D.F."/>
            <person name="Chenevix-Trench G."/>
            <person name="Tan M.-H."/>
            <person name="Khoo S.K."/>
            <person name="Teh B.T."/>
            <person name="Yuen S.T."/>
            <person name="Leung S.Y."/>
            <person name="Wooster R."/>
            <person name="Futreal P.A."/>
            <person name="Stratton M.R."/>
        </authorList>
    </citation>
    <scope>VARIANTS [LARGE SCALE ANALYSIS] SER-242; GLU-627; VAL-662; ARG-752 AND GLU-842</scope>
</reference>
<evidence type="ECO:0000250" key="1"/>
<evidence type="ECO:0000250" key="2">
    <source>
        <dbReference type="UniProtKB" id="Q9QY01"/>
    </source>
</evidence>
<evidence type="ECO:0000255" key="3">
    <source>
        <dbReference type="PROSITE-ProRule" id="PRU00159"/>
    </source>
</evidence>
<evidence type="ECO:0000255" key="4">
    <source>
        <dbReference type="PROSITE-ProRule" id="PRU10027"/>
    </source>
</evidence>
<evidence type="ECO:0000256" key="5">
    <source>
        <dbReference type="SAM" id="MobiDB-lite"/>
    </source>
</evidence>
<evidence type="ECO:0000269" key="6">
    <source>
    </source>
</evidence>
<evidence type="ECO:0000269" key="7">
    <source>
    </source>
</evidence>
<evidence type="ECO:0000269" key="8">
    <source>
    </source>
</evidence>
<evidence type="ECO:0000269" key="9">
    <source>
    </source>
</evidence>
<evidence type="ECO:0000269" key="10">
    <source>
    </source>
</evidence>
<evidence type="ECO:0000269" key="11">
    <source>
    </source>
</evidence>
<evidence type="ECO:0000269" key="12">
    <source>
    </source>
</evidence>
<evidence type="ECO:0000269" key="13">
    <source>
    </source>
</evidence>
<evidence type="ECO:0000269" key="14">
    <source>
    </source>
</evidence>
<evidence type="ECO:0000305" key="15"/>
<evidence type="ECO:0007829" key="16">
    <source>
        <dbReference type="PDB" id="6QAU"/>
    </source>
</evidence>
<evidence type="ECO:0007829" key="17">
    <source>
        <dbReference type="PDB" id="6QAV"/>
    </source>
</evidence>
<keyword id="KW-0002">3D-structure</keyword>
<keyword id="KW-0067">ATP-binding</keyword>
<keyword id="KW-0072">Autophagy</keyword>
<keyword id="KW-0968">Cytoplasmic vesicle</keyword>
<keyword id="KW-0418">Kinase</keyword>
<keyword id="KW-0472">Membrane</keyword>
<keyword id="KW-0524">Neurogenesis</keyword>
<keyword id="KW-0547">Nucleotide-binding</keyword>
<keyword id="KW-0597">Phosphoprotein</keyword>
<keyword id="KW-1267">Proteomics identification</keyword>
<keyword id="KW-1185">Reference proteome</keyword>
<keyword id="KW-0723">Serine/threonine-protein kinase</keyword>
<keyword id="KW-0808">Transferase</keyword>
<protein>
    <recommendedName>
        <fullName>Serine/threonine-protein kinase ULK2</fullName>
        <ecNumber>2.7.11.1</ecNumber>
    </recommendedName>
    <alternativeName>
        <fullName>Unc-51-like kinase 2</fullName>
    </alternativeName>
</protein>